<organism>
    <name type="scientific">Janthinobacterium sp. (strain Marseille)</name>
    <name type="common">Minibacterium massiliensis</name>
    <dbReference type="NCBI Taxonomy" id="375286"/>
    <lineage>
        <taxon>Bacteria</taxon>
        <taxon>Pseudomonadati</taxon>
        <taxon>Pseudomonadota</taxon>
        <taxon>Betaproteobacteria</taxon>
        <taxon>Burkholderiales</taxon>
        <taxon>Oxalobacteraceae</taxon>
        <taxon>Janthinobacterium</taxon>
    </lineage>
</organism>
<sequence length="577" mass="64053">MRASRFFISTLKEAPSDAEIVSHKLMMRAGMIKKIGSGIYTYMPMGLRVIRKVEAIIREEMNNAHAIELLMPLVQPAELWQETGRWDKMGAELMRVKDRHGREFAIQPTSEEVVTDVVRTEIKSYRQLPINFYHIQTKFRDERRPRFGLMRGREFTMKDAYSFDRDIDGLKKSYQIMFDAYVKIFNRFGLQFRAVAADNGAIGGSGSHEFHVIADTGEDALVYCPNSDYAANMEAAEALPLSSARAAPTQALTKTATPGKAKCEDVAALLNLPLAQTVKSIVLTVEKEDKGVTSKQVWLLLLRGDHELNEVKAAKIPGIAGYRFASEAEIIEWFDTPPGYLGPINTKKPVNLVVDRTVANMHDFVCGANEVDFHFTGVNWGRDLPEAQVFDIRNVVEGDPSPDGKGTLAIQRGIEVGHVFQLGTAYSESMKATYLDENGKPQLIQMGCYGIGVTRILGAAIEQNFDDKGIIWPTALAPFEVVLCPMGYDRSEGVKAETDKLYEALQAAGVDVILDDRGERPGAMFADWELIGVPHRIVIGDRGLKEGKLEYQGRRDAAATPVALEEMLGFVQAKLAN</sequence>
<comment type="function">
    <text evidence="1">Catalyzes the attachment of proline to tRNA(Pro) in a two-step reaction: proline is first activated by ATP to form Pro-AMP and then transferred to the acceptor end of tRNA(Pro). As ProRS can inadvertently accommodate and process non-cognate amino acids such as alanine and cysteine, to avoid such errors it has two additional distinct editing activities against alanine. One activity is designated as 'pretransfer' editing and involves the tRNA(Pro)-independent hydrolysis of activated Ala-AMP. The other activity is designated 'posttransfer' editing and involves deacylation of mischarged Ala-tRNA(Pro). The misacylated Cys-tRNA(Pro) is not edited by ProRS.</text>
</comment>
<comment type="catalytic activity">
    <reaction evidence="1">
        <text>tRNA(Pro) + L-proline + ATP = L-prolyl-tRNA(Pro) + AMP + diphosphate</text>
        <dbReference type="Rhea" id="RHEA:14305"/>
        <dbReference type="Rhea" id="RHEA-COMP:9700"/>
        <dbReference type="Rhea" id="RHEA-COMP:9702"/>
        <dbReference type="ChEBI" id="CHEBI:30616"/>
        <dbReference type="ChEBI" id="CHEBI:33019"/>
        <dbReference type="ChEBI" id="CHEBI:60039"/>
        <dbReference type="ChEBI" id="CHEBI:78442"/>
        <dbReference type="ChEBI" id="CHEBI:78532"/>
        <dbReference type="ChEBI" id="CHEBI:456215"/>
        <dbReference type="EC" id="6.1.1.15"/>
    </reaction>
</comment>
<comment type="subunit">
    <text evidence="1">Homodimer.</text>
</comment>
<comment type="subcellular location">
    <subcellularLocation>
        <location evidence="1">Cytoplasm</location>
    </subcellularLocation>
</comment>
<comment type="domain">
    <text evidence="1">Consists of three domains: the N-terminal catalytic domain, the editing domain and the C-terminal anticodon-binding domain.</text>
</comment>
<comment type="similarity">
    <text evidence="1">Belongs to the class-II aminoacyl-tRNA synthetase family. ProS type 1 subfamily.</text>
</comment>
<protein>
    <recommendedName>
        <fullName evidence="1">Proline--tRNA ligase</fullName>
        <ecNumber evidence="1">6.1.1.15</ecNumber>
    </recommendedName>
    <alternativeName>
        <fullName evidence="1">Prolyl-tRNA synthetase</fullName>
        <shortName evidence="1">ProRS</shortName>
    </alternativeName>
</protein>
<evidence type="ECO:0000255" key="1">
    <source>
        <dbReference type="HAMAP-Rule" id="MF_01569"/>
    </source>
</evidence>
<reference key="1">
    <citation type="journal article" date="2007" name="PLoS Genet.">
        <title>Genome analysis of Minibacterium massiliensis highlights the convergent evolution of water-living bacteria.</title>
        <authorList>
            <person name="Audic S."/>
            <person name="Robert C."/>
            <person name="Campagna B."/>
            <person name="Parinello H."/>
            <person name="Claverie J.-M."/>
            <person name="Raoult D."/>
            <person name="Drancourt M."/>
        </authorList>
    </citation>
    <scope>NUCLEOTIDE SEQUENCE [LARGE SCALE GENOMIC DNA]</scope>
    <source>
        <strain>Marseille</strain>
    </source>
</reference>
<name>SYP_JANMA</name>
<dbReference type="EC" id="6.1.1.15" evidence="1"/>
<dbReference type="EMBL" id="CP000269">
    <property type="protein sequence ID" value="ABR89722.1"/>
    <property type="molecule type" value="Genomic_DNA"/>
</dbReference>
<dbReference type="RefSeq" id="WP_012080837.1">
    <property type="nucleotide sequence ID" value="NC_009659.1"/>
</dbReference>
<dbReference type="SMR" id="A6T2D1"/>
<dbReference type="STRING" id="375286.mma_2988"/>
<dbReference type="KEGG" id="mms:mma_2988"/>
<dbReference type="eggNOG" id="COG0442">
    <property type="taxonomic scope" value="Bacteria"/>
</dbReference>
<dbReference type="HOGENOM" id="CLU_016739_0_0_4"/>
<dbReference type="OrthoDB" id="9809052at2"/>
<dbReference type="Proteomes" id="UP000006388">
    <property type="component" value="Chromosome"/>
</dbReference>
<dbReference type="GO" id="GO:0005829">
    <property type="term" value="C:cytosol"/>
    <property type="evidence" value="ECO:0007669"/>
    <property type="project" value="TreeGrafter"/>
</dbReference>
<dbReference type="GO" id="GO:0002161">
    <property type="term" value="F:aminoacyl-tRNA deacylase activity"/>
    <property type="evidence" value="ECO:0007669"/>
    <property type="project" value="InterPro"/>
</dbReference>
<dbReference type="GO" id="GO:0005524">
    <property type="term" value="F:ATP binding"/>
    <property type="evidence" value="ECO:0007669"/>
    <property type="project" value="UniProtKB-UniRule"/>
</dbReference>
<dbReference type="GO" id="GO:0004827">
    <property type="term" value="F:proline-tRNA ligase activity"/>
    <property type="evidence" value="ECO:0007669"/>
    <property type="project" value="UniProtKB-UniRule"/>
</dbReference>
<dbReference type="GO" id="GO:0006433">
    <property type="term" value="P:prolyl-tRNA aminoacylation"/>
    <property type="evidence" value="ECO:0007669"/>
    <property type="project" value="UniProtKB-UniRule"/>
</dbReference>
<dbReference type="CDD" id="cd04334">
    <property type="entry name" value="ProRS-INS"/>
    <property type="match status" value="1"/>
</dbReference>
<dbReference type="CDD" id="cd00861">
    <property type="entry name" value="ProRS_anticodon_short"/>
    <property type="match status" value="1"/>
</dbReference>
<dbReference type="CDD" id="cd00779">
    <property type="entry name" value="ProRS_core_prok"/>
    <property type="match status" value="1"/>
</dbReference>
<dbReference type="FunFam" id="3.30.930.10:FF:000042">
    <property type="entry name" value="probable proline--tRNA ligase, mitochondrial"/>
    <property type="match status" value="1"/>
</dbReference>
<dbReference type="FunFam" id="3.30.930.10:FF:000097">
    <property type="entry name" value="Proline--tRNA ligase"/>
    <property type="match status" value="1"/>
</dbReference>
<dbReference type="Gene3D" id="3.40.50.800">
    <property type="entry name" value="Anticodon-binding domain"/>
    <property type="match status" value="1"/>
</dbReference>
<dbReference type="Gene3D" id="3.30.930.10">
    <property type="entry name" value="Bira Bifunctional Protein, Domain 2"/>
    <property type="match status" value="2"/>
</dbReference>
<dbReference type="Gene3D" id="3.90.960.10">
    <property type="entry name" value="YbaK/aminoacyl-tRNA synthetase-associated domain"/>
    <property type="match status" value="1"/>
</dbReference>
<dbReference type="HAMAP" id="MF_01569">
    <property type="entry name" value="Pro_tRNA_synth_type1"/>
    <property type="match status" value="1"/>
</dbReference>
<dbReference type="InterPro" id="IPR002314">
    <property type="entry name" value="aa-tRNA-synt_IIb"/>
</dbReference>
<dbReference type="InterPro" id="IPR006195">
    <property type="entry name" value="aa-tRNA-synth_II"/>
</dbReference>
<dbReference type="InterPro" id="IPR045864">
    <property type="entry name" value="aa-tRNA-synth_II/BPL/LPL"/>
</dbReference>
<dbReference type="InterPro" id="IPR004154">
    <property type="entry name" value="Anticodon-bd"/>
</dbReference>
<dbReference type="InterPro" id="IPR036621">
    <property type="entry name" value="Anticodon-bd_dom_sf"/>
</dbReference>
<dbReference type="InterPro" id="IPR002316">
    <property type="entry name" value="Pro-tRNA-ligase_IIa"/>
</dbReference>
<dbReference type="InterPro" id="IPR004500">
    <property type="entry name" value="Pro-tRNA-synth_IIa_bac-type"/>
</dbReference>
<dbReference type="InterPro" id="IPR023717">
    <property type="entry name" value="Pro-tRNA-Synthase_IIa_type1"/>
</dbReference>
<dbReference type="InterPro" id="IPR050062">
    <property type="entry name" value="Pro-tRNA_synthetase"/>
</dbReference>
<dbReference type="InterPro" id="IPR044140">
    <property type="entry name" value="ProRS_anticodon_short"/>
</dbReference>
<dbReference type="InterPro" id="IPR033730">
    <property type="entry name" value="ProRS_core_prok"/>
</dbReference>
<dbReference type="InterPro" id="IPR036754">
    <property type="entry name" value="YbaK/aa-tRNA-synt-asso_dom_sf"/>
</dbReference>
<dbReference type="InterPro" id="IPR007214">
    <property type="entry name" value="YbaK/aa-tRNA-synth-assoc-dom"/>
</dbReference>
<dbReference type="NCBIfam" id="NF006625">
    <property type="entry name" value="PRK09194.1"/>
    <property type="match status" value="1"/>
</dbReference>
<dbReference type="NCBIfam" id="TIGR00409">
    <property type="entry name" value="proS_fam_II"/>
    <property type="match status" value="1"/>
</dbReference>
<dbReference type="PANTHER" id="PTHR42753">
    <property type="entry name" value="MITOCHONDRIAL RIBOSOME PROTEIN L39/PROLYL-TRNA LIGASE FAMILY MEMBER"/>
    <property type="match status" value="1"/>
</dbReference>
<dbReference type="PANTHER" id="PTHR42753:SF2">
    <property type="entry name" value="PROLINE--TRNA LIGASE"/>
    <property type="match status" value="1"/>
</dbReference>
<dbReference type="Pfam" id="PF03129">
    <property type="entry name" value="HGTP_anticodon"/>
    <property type="match status" value="1"/>
</dbReference>
<dbReference type="Pfam" id="PF00587">
    <property type="entry name" value="tRNA-synt_2b"/>
    <property type="match status" value="1"/>
</dbReference>
<dbReference type="Pfam" id="PF04073">
    <property type="entry name" value="tRNA_edit"/>
    <property type="match status" value="1"/>
</dbReference>
<dbReference type="PIRSF" id="PIRSF001535">
    <property type="entry name" value="ProRS_1"/>
    <property type="match status" value="1"/>
</dbReference>
<dbReference type="PRINTS" id="PR01046">
    <property type="entry name" value="TRNASYNTHPRO"/>
</dbReference>
<dbReference type="SUPFAM" id="SSF52954">
    <property type="entry name" value="Class II aaRS ABD-related"/>
    <property type="match status" value="1"/>
</dbReference>
<dbReference type="SUPFAM" id="SSF55681">
    <property type="entry name" value="Class II aaRS and biotin synthetases"/>
    <property type="match status" value="1"/>
</dbReference>
<dbReference type="SUPFAM" id="SSF55826">
    <property type="entry name" value="YbaK/ProRS associated domain"/>
    <property type="match status" value="1"/>
</dbReference>
<dbReference type="PROSITE" id="PS50862">
    <property type="entry name" value="AA_TRNA_LIGASE_II"/>
    <property type="match status" value="1"/>
</dbReference>
<keyword id="KW-0030">Aminoacyl-tRNA synthetase</keyword>
<keyword id="KW-0067">ATP-binding</keyword>
<keyword id="KW-0963">Cytoplasm</keyword>
<keyword id="KW-0436">Ligase</keyword>
<keyword id="KW-0547">Nucleotide-binding</keyword>
<keyword id="KW-0648">Protein biosynthesis</keyword>
<proteinExistence type="inferred from homology"/>
<feature type="chain" id="PRO_1000069146" description="Proline--tRNA ligase">
    <location>
        <begin position="1"/>
        <end position="577"/>
    </location>
</feature>
<accession>A6T2D1</accession>
<gene>
    <name evidence="1" type="primary">proS</name>
    <name type="ordered locus">mma_2988</name>
</gene>